<protein>
    <recommendedName>
        <fullName evidence="1">Phosphopantetheine adenylyltransferase</fullName>
        <ecNumber evidence="1">2.7.7.3</ecNumber>
    </recommendedName>
    <alternativeName>
        <fullName evidence="1">Dephospho-CoA pyrophosphorylase</fullName>
    </alternativeName>
    <alternativeName>
        <fullName evidence="1">Pantetheine-phosphate adenylyltransferase</fullName>
        <shortName evidence="1">PPAT</shortName>
    </alternativeName>
</protein>
<feature type="chain" id="PRO_1000011197" description="Phosphopantetheine adenylyltransferase">
    <location>
        <begin position="1"/>
        <end position="157"/>
    </location>
</feature>
<feature type="binding site" evidence="1">
    <location>
        <begin position="8"/>
        <end position="9"/>
    </location>
    <ligand>
        <name>ATP</name>
        <dbReference type="ChEBI" id="CHEBI:30616"/>
    </ligand>
</feature>
<feature type="binding site" evidence="1">
    <location>
        <position position="8"/>
    </location>
    <ligand>
        <name>substrate</name>
    </ligand>
</feature>
<feature type="binding site" evidence="1">
    <location>
        <position position="16"/>
    </location>
    <ligand>
        <name>ATP</name>
        <dbReference type="ChEBI" id="CHEBI:30616"/>
    </ligand>
</feature>
<feature type="binding site" evidence="1">
    <location>
        <position position="40"/>
    </location>
    <ligand>
        <name>substrate</name>
    </ligand>
</feature>
<feature type="binding site" evidence="1">
    <location>
        <position position="72"/>
    </location>
    <ligand>
        <name>substrate</name>
    </ligand>
</feature>
<feature type="binding site" evidence="1">
    <location>
        <position position="86"/>
    </location>
    <ligand>
        <name>substrate</name>
    </ligand>
</feature>
<feature type="binding site" evidence="1">
    <location>
        <begin position="87"/>
        <end position="89"/>
    </location>
    <ligand>
        <name>ATP</name>
        <dbReference type="ChEBI" id="CHEBI:30616"/>
    </ligand>
</feature>
<feature type="binding site" evidence="1">
    <location>
        <position position="97"/>
    </location>
    <ligand>
        <name>ATP</name>
        <dbReference type="ChEBI" id="CHEBI:30616"/>
    </ligand>
</feature>
<feature type="binding site" evidence="1">
    <location>
        <begin position="122"/>
        <end position="128"/>
    </location>
    <ligand>
        <name>ATP</name>
        <dbReference type="ChEBI" id="CHEBI:30616"/>
    </ligand>
</feature>
<feature type="site" description="Transition state stabilizer" evidence="1">
    <location>
        <position position="16"/>
    </location>
</feature>
<keyword id="KW-0067">ATP-binding</keyword>
<keyword id="KW-0173">Coenzyme A biosynthesis</keyword>
<keyword id="KW-0963">Cytoplasm</keyword>
<keyword id="KW-0460">Magnesium</keyword>
<keyword id="KW-0547">Nucleotide-binding</keyword>
<keyword id="KW-0548">Nucleotidyltransferase</keyword>
<keyword id="KW-1185">Reference proteome</keyword>
<keyword id="KW-0808">Transferase</keyword>
<evidence type="ECO:0000255" key="1">
    <source>
        <dbReference type="HAMAP-Rule" id="MF_00151"/>
    </source>
</evidence>
<comment type="function">
    <text evidence="1">Reversibly transfers an adenylyl group from ATP to 4'-phosphopantetheine, yielding dephospho-CoA (dPCoA) and pyrophosphate.</text>
</comment>
<comment type="catalytic activity">
    <reaction evidence="1">
        <text>(R)-4'-phosphopantetheine + ATP + H(+) = 3'-dephospho-CoA + diphosphate</text>
        <dbReference type="Rhea" id="RHEA:19801"/>
        <dbReference type="ChEBI" id="CHEBI:15378"/>
        <dbReference type="ChEBI" id="CHEBI:30616"/>
        <dbReference type="ChEBI" id="CHEBI:33019"/>
        <dbReference type="ChEBI" id="CHEBI:57328"/>
        <dbReference type="ChEBI" id="CHEBI:61723"/>
        <dbReference type="EC" id="2.7.7.3"/>
    </reaction>
</comment>
<comment type="cofactor">
    <cofactor evidence="1">
        <name>Mg(2+)</name>
        <dbReference type="ChEBI" id="CHEBI:18420"/>
    </cofactor>
</comment>
<comment type="pathway">
    <text evidence="1">Cofactor biosynthesis; coenzyme A biosynthesis; CoA from (R)-pantothenate: step 4/5.</text>
</comment>
<comment type="subunit">
    <text evidence="1">Homohexamer.</text>
</comment>
<comment type="subcellular location">
    <subcellularLocation>
        <location evidence="1">Cytoplasm</location>
    </subcellularLocation>
</comment>
<comment type="similarity">
    <text evidence="1">Belongs to the bacterial CoaD family.</text>
</comment>
<accession>A3PCX3</accession>
<dbReference type="EC" id="2.7.7.3" evidence="1"/>
<dbReference type="EMBL" id="CP000576">
    <property type="protein sequence ID" value="ABO17598.1"/>
    <property type="molecule type" value="Genomic_DNA"/>
</dbReference>
<dbReference type="RefSeq" id="WP_011862946.1">
    <property type="nucleotide sequence ID" value="NC_009091.1"/>
</dbReference>
<dbReference type="SMR" id="A3PCX3"/>
<dbReference type="STRING" id="167546.P9301_09751"/>
<dbReference type="KEGG" id="pmg:P9301_09751"/>
<dbReference type="eggNOG" id="COG0669">
    <property type="taxonomic scope" value="Bacteria"/>
</dbReference>
<dbReference type="HOGENOM" id="CLU_100149_0_1_3"/>
<dbReference type="OrthoDB" id="9806661at2"/>
<dbReference type="UniPathway" id="UPA00241">
    <property type="reaction ID" value="UER00355"/>
</dbReference>
<dbReference type="Proteomes" id="UP000001430">
    <property type="component" value="Chromosome"/>
</dbReference>
<dbReference type="GO" id="GO:0005737">
    <property type="term" value="C:cytoplasm"/>
    <property type="evidence" value="ECO:0007669"/>
    <property type="project" value="UniProtKB-SubCell"/>
</dbReference>
<dbReference type="GO" id="GO:0005524">
    <property type="term" value="F:ATP binding"/>
    <property type="evidence" value="ECO:0007669"/>
    <property type="project" value="UniProtKB-KW"/>
</dbReference>
<dbReference type="GO" id="GO:0004595">
    <property type="term" value="F:pantetheine-phosphate adenylyltransferase activity"/>
    <property type="evidence" value="ECO:0007669"/>
    <property type="project" value="UniProtKB-UniRule"/>
</dbReference>
<dbReference type="GO" id="GO:0015937">
    <property type="term" value="P:coenzyme A biosynthetic process"/>
    <property type="evidence" value="ECO:0007669"/>
    <property type="project" value="UniProtKB-UniRule"/>
</dbReference>
<dbReference type="CDD" id="cd02163">
    <property type="entry name" value="PPAT"/>
    <property type="match status" value="1"/>
</dbReference>
<dbReference type="Gene3D" id="3.40.50.620">
    <property type="entry name" value="HUPs"/>
    <property type="match status" value="1"/>
</dbReference>
<dbReference type="HAMAP" id="MF_00151">
    <property type="entry name" value="PPAT_bact"/>
    <property type="match status" value="1"/>
</dbReference>
<dbReference type="InterPro" id="IPR004821">
    <property type="entry name" value="Cyt_trans-like"/>
</dbReference>
<dbReference type="InterPro" id="IPR001980">
    <property type="entry name" value="PPAT"/>
</dbReference>
<dbReference type="InterPro" id="IPR014729">
    <property type="entry name" value="Rossmann-like_a/b/a_fold"/>
</dbReference>
<dbReference type="NCBIfam" id="TIGR01510">
    <property type="entry name" value="coaD_prev_kdtB"/>
    <property type="match status" value="1"/>
</dbReference>
<dbReference type="NCBIfam" id="TIGR00125">
    <property type="entry name" value="cyt_tran_rel"/>
    <property type="match status" value="1"/>
</dbReference>
<dbReference type="PANTHER" id="PTHR21342">
    <property type="entry name" value="PHOSPHOPANTETHEINE ADENYLYLTRANSFERASE"/>
    <property type="match status" value="1"/>
</dbReference>
<dbReference type="PANTHER" id="PTHR21342:SF1">
    <property type="entry name" value="PHOSPHOPANTETHEINE ADENYLYLTRANSFERASE"/>
    <property type="match status" value="1"/>
</dbReference>
<dbReference type="Pfam" id="PF01467">
    <property type="entry name" value="CTP_transf_like"/>
    <property type="match status" value="1"/>
</dbReference>
<dbReference type="PRINTS" id="PR01020">
    <property type="entry name" value="LPSBIOSNTHSS"/>
</dbReference>
<dbReference type="SUPFAM" id="SSF52374">
    <property type="entry name" value="Nucleotidylyl transferase"/>
    <property type="match status" value="1"/>
</dbReference>
<name>COAD_PROM0</name>
<proteinExistence type="inferred from homology"/>
<sequence length="157" mass="17705">MKILYPGTFDPLTNGHLDLIERAEKIFGKLVVAVLENTSKTPTFNLERRIIQIKNSLSHLPNIEVISYSGLTVDCANDLKANLILRGLRAMSDFEYELQIAHTNKSLNNDIETIFLSTNTNYSFLSSSLVKEVAKFGGEINHMVPPSVEKDLKDYFK</sequence>
<gene>
    <name evidence="1" type="primary">coaD</name>
    <name type="ordered locus">P9301_09751</name>
</gene>
<organism>
    <name type="scientific">Prochlorococcus marinus (strain MIT 9301)</name>
    <dbReference type="NCBI Taxonomy" id="167546"/>
    <lineage>
        <taxon>Bacteria</taxon>
        <taxon>Bacillati</taxon>
        <taxon>Cyanobacteriota</taxon>
        <taxon>Cyanophyceae</taxon>
        <taxon>Synechococcales</taxon>
        <taxon>Prochlorococcaceae</taxon>
        <taxon>Prochlorococcus</taxon>
    </lineage>
</organism>
<reference key="1">
    <citation type="journal article" date="2007" name="PLoS Genet.">
        <title>Patterns and implications of gene gain and loss in the evolution of Prochlorococcus.</title>
        <authorList>
            <person name="Kettler G.C."/>
            <person name="Martiny A.C."/>
            <person name="Huang K."/>
            <person name="Zucker J."/>
            <person name="Coleman M.L."/>
            <person name="Rodrigue S."/>
            <person name="Chen F."/>
            <person name="Lapidus A."/>
            <person name="Ferriera S."/>
            <person name="Johnson J."/>
            <person name="Steglich C."/>
            <person name="Church G.M."/>
            <person name="Richardson P."/>
            <person name="Chisholm S.W."/>
        </authorList>
    </citation>
    <scope>NUCLEOTIDE SEQUENCE [LARGE SCALE GENOMIC DNA]</scope>
    <source>
        <strain>MIT 9301</strain>
    </source>
</reference>